<accession>P0DA63</accession>
<accession>P63931</accession>
<accession>Q8NZG9</accession>
<organism>
    <name type="scientific">Streptococcus pyogenes serotype M3 (strain SSI-1)</name>
    <dbReference type="NCBI Taxonomy" id="193567"/>
    <lineage>
        <taxon>Bacteria</taxon>
        <taxon>Bacillati</taxon>
        <taxon>Bacillota</taxon>
        <taxon>Bacilli</taxon>
        <taxon>Lactobacillales</taxon>
        <taxon>Streptococcaceae</taxon>
        <taxon>Streptococcus</taxon>
    </lineage>
</organism>
<dbReference type="EC" id="4.1.2.4" evidence="1"/>
<dbReference type="EMBL" id="BA000034">
    <property type="protein sequence ID" value="BAC63351.1"/>
    <property type="status" value="ALT_INIT"/>
    <property type="molecule type" value="Genomic_DNA"/>
</dbReference>
<dbReference type="RefSeq" id="WP_011018205.1">
    <property type="nucleotide sequence ID" value="NC_004606.1"/>
</dbReference>
<dbReference type="SMR" id="P0DA63"/>
<dbReference type="KEGG" id="sps:SPs0256"/>
<dbReference type="HOGENOM" id="CLU_053595_0_2_9"/>
<dbReference type="UniPathway" id="UPA00002">
    <property type="reaction ID" value="UER00468"/>
</dbReference>
<dbReference type="GO" id="GO:0005737">
    <property type="term" value="C:cytoplasm"/>
    <property type="evidence" value="ECO:0007669"/>
    <property type="project" value="UniProtKB-SubCell"/>
</dbReference>
<dbReference type="GO" id="GO:0004139">
    <property type="term" value="F:deoxyribose-phosphate aldolase activity"/>
    <property type="evidence" value="ECO:0007669"/>
    <property type="project" value="UniProtKB-UniRule"/>
</dbReference>
<dbReference type="GO" id="GO:0006018">
    <property type="term" value="P:2-deoxyribose 1-phosphate catabolic process"/>
    <property type="evidence" value="ECO:0007669"/>
    <property type="project" value="UniProtKB-UniRule"/>
</dbReference>
<dbReference type="GO" id="GO:0016052">
    <property type="term" value="P:carbohydrate catabolic process"/>
    <property type="evidence" value="ECO:0007669"/>
    <property type="project" value="TreeGrafter"/>
</dbReference>
<dbReference type="GO" id="GO:0009264">
    <property type="term" value="P:deoxyribonucleotide catabolic process"/>
    <property type="evidence" value="ECO:0007669"/>
    <property type="project" value="InterPro"/>
</dbReference>
<dbReference type="CDD" id="cd00959">
    <property type="entry name" value="DeoC"/>
    <property type="match status" value="1"/>
</dbReference>
<dbReference type="FunFam" id="3.20.20.70:FF:000044">
    <property type="entry name" value="Deoxyribose-phosphate aldolase"/>
    <property type="match status" value="1"/>
</dbReference>
<dbReference type="Gene3D" id="3.20.20.70">
    <property type="entry name" value="Aldolase class I"/>
    <property type="match status" value="1"/>
</dbReference>
<dbReference type="HAMAP" id="MF_00114">
    <property type="entry name" value="DeoC_type1"/>
    <property type="match status" value="1"/>
</dbReference>
<dbReference type="InterPro" id="IPR013785">
    <property type="entry name" value="Aldolase_TIM"/>
</dbReference>
<dbReference type="InterPro" id="IPR011343">
    <property type="entry name" value="DeoC"/>
</dbReference>
<dbReference type="InterPro" id="IPR002915">
    <property type="entry name" value="DeoC/FbaB/LacD_aldolase"/>
</dbReference>
<dbReference type="InterPro" id="IPR028581">
    <property type="entry name" value="DeoC_typeI"/>
</dbReference>
<dbReference type="NCBIfam" id="TIGR00126">
    <property type="entry name" value="deoC"/>
    <property type="match status" value="1"/>
</dbReference>
<dbReference type="PANTHER" id="PTHR10889">
    <property type="entry name" value="DEOXYRIBOSE-PHOSPHATE ALDOLASE"/>
    <property type="match status" value="1"/>
</dbReference>
<dbReference type="PANTHER" id="PTHR10889:SF1">
    <property type="entry name" value="DEOXYRIBOSE-PHOSPHATE ALDOLASE"/>
    <property type="match status" value="1"/>
</dbReference>
<dbReference type="Pfam" id="PF01791">
    <property type="entry name" value="DeoC"/>
    <property type="match status" value="1"/>
</dbReference>
<dbReference type="PIRSF" id="PIRSF001357">
    <property type="entry name" value="DeoC"/>
    <property type="match status" value="1"/>
</dbReference>
<dbReference type="SMART" id="SM01133">
    <property type="entry name" value="DeoC"/>
    <property type="match status" value="1"/>
</dbReference>
<dbReference type="SUPFAM" id="SSF51569">
    <property type="entry name" value="Aldolase"/>
    <property type="match status" value="1"/>
</dbReference>
<name>DEOC_STRPQ</name>
<comment type="function">
    <text evidence="1">Catalyzes a reversible aldol reaction between acetaldehyde and D-glyceraldehyde 3-phosphate to generate 2-deoxy-D-ribose 5-phosphate.</text>
</comment>
<comment type="catalytic activity">
    <reaction evidence="1">
        <text>2-deoxy-D-ribose 5-phosphate = D-glyceraldehyde 3-phosphate + acetaldehyde</text>
        <dbReference type="Rhea" id="RHEA:12821"/>
        <dbReference type="ChEBI" id="CHEBI:15343"/>
        <dbReference type="ChEBI" id="CHEBI:59776"/>
        <dbReference type="ChEBI" id="CHEBI:62877"/>
        <dbReference type="EC" id="4.1.2.4"/>
    </reaction>
</comment>
<comment type="pathway">
    <text evidence="1">Carbohydrate degradation; 2-deoxy-D-ribose 1-phosphate degradation; D-glyceraldehyde 3-phosphate and acetaldehyde from 2-deoxy-alpha-D-ribose 1-phosphate: step 2/2.</text>
</comment>
<comment type="subcellular location">
    <subcellularLocation>
        <location evidence="1">Cytoplasm</location>
    </subcellularLocation>
</comment>
<comment type="similarity">
    <text evidence="1">Belongs to the DeoC/FbaB aldolase family. DeoC type 1 subfamily.</text>
</comment>
<comment type="sequence caution" evidence="2">
    <conflict type="erroneous initiation">
        <sequence resource="EMBL-CDS" id="BAC63351"/>
    </conflict>
</comment>
<proteinExistence type="inferred from homology"/>
<protein>
    <recommendedName>
        <fullName evidence="1">Deoxyribose-phosphate aldolase</fullName>
        <shortName evidence="1">DERA</shortName>
        <ecNumber evidence="1">4.1.2.4</ecNumber>
    </recommendedName>
    <alternativeName>
        <fullName evidence="1">2-deoxy-D-ribose 5-phosphate aldolase</fullName>
    </alternativeName>
    <alternativeName>
        <fullName evidence="1">Phosphodeoxyriboaldolase</fullName>
        <shortName evidence="1">Deoxyriboaldolase</shortName>
    </alternativeName>
</protein>
<keyword id="KW-0963">Cytoplasm</keyword>
<keyword id="KW-0456">Lyase</keyword>
<keyword id="KW-0704">Schiff base</keyword>
<evidence type="ECO:0000255" key="1">
    <source>
        <dbReference type="HAMAP-Rule" id="MF_00114"/>
    </source>
</evidence>
<evidence type="ECO:0000305" key="2"/>
<gene>
    <name evidence="1" type="primary">deoC</name>
    <name type="ordered locus">SPs0256</name>
</gene>
<sequence>MEVKDILKTVDHTLLATTATWPEIQTILDDAMAYETASACIPASYVKKAAEYVSGKLAICTVIGFPNGYSTTAAKVFECQDAIQNGADEIDMVINLTDVKNGDFDTVEEEIRQIKAKCQDHILKVIVETCQLTKEELIELCGVVTRSGADFIKTSTGFSTAGATFEDVEVMAKYVGEGVKIKAAGGISSLEDAKTFIALGASRLGTSRIIKIVKNEATKPDSY</sequence>
<reference key="1">
    <citation type="journal article" date="2003" name="Genome Res.">
        <title>Genome sequence of an M3 strain of Streptococcus pyogenes reveals a large-scale genomic rearrangement in invasive strains and new insights into phage evolution.</title>
        <authorList>
            <person name="Nakagawa I."/>
            <person name="Kurokawa K."/>
            <person name="Yamashita A."/>
            <person name="Nakata M."/>
            <person name="Tomiyasu Y."/>
            <person name="Okahashi N."/>
            <person name="Kawabata S."/>
            <person name="Yamazaki K."/>
            <person name="Shiba T."/>
            <person name="Yasunaga T."/>
            <person name="Hayashi H."/>
            <person name="Hattori M."/>
            <person name="Hamada S."/>
        </authorList>
    </citation>
    <scope>NUCLEOTIDE SEQUENCE [LARGE SCALE GENOMIC DNA]</scope>
    <source>
        <strain>SSI-1</strain>
    </source>
</reference>
<feature type="chain" id="PRO_0000411319" description="Deoxyribose-phosphate aldolase">
    <location>
        <begin position="1"/>
        <end position="223"/>
    </location>
</feature>
<feature type="active site" description="Proton donor/acceptor" evidence="1">
    <location>
        <position position="91"/>
    </location>
</feature>
<feature type="active site" description="Schiff-base intermediate with acetaldehyde" evidence="1">
    <location>
        <position position="153"/>
    </location>
</feature>
<feature type="active site" description="Proton donor/acceptor" evidence="1">
    <location>
        <position position="182"/>
    </location>
</feature>